<protein>
    <recommendedName>
        <fullName>Ig kappa chain V region S211</fullName>
    </recommendedName>
</protein>
<accession>P01681</accession>
<keyword id="KW-1064">Adaptive immunity</keyword>
<keyword id="KW-0086">Bence-Jones protein</keyword>
<keyword id="KW-0903">Direct protein sequencing</keyword>
<keyword id="KW-0391">Immunity</keyword>
<keyword id="KW-1280">Immunoglobulin</keyword>
<keyword id="KW-1185">Reference proteome</keyword>
<sequence length="109" mass="11948">DVQMTQSPSYLAASPGESVSISCKASNKSISNNLAWYZZKPGKANKLLISSGSTLQSGTPSRFSGSGSDTDFTLTIRSLEFQDFAVYYCZZYNEPYYTFGAGTMLELKR</sequence>
<dbReference type="PIR" id="A01944">
    <property type="entry name" value="KVRT21"/>
</dbReference>
<dbReference type="FunCoup" id="P01681">
    <property type="interactions" value="402"/>
</dbReference>
<dbReference type="STRING" id="10116.ENSRNOP00000069733"/>
<dbReference type="InParanoid" id="P01681"/>
<dbReference type="Proteomes" id="UP000002494">
    <property type="component" value="Unplaced"/>
</dbReference>
<dbReference type="GO" id="GO:0019814">
    <property type="term" value="C:immunoglobulin complex"/>
    <property type="evidence" value="ECO:0000318"/>
    <property type="project" value="GO_Central"/>
</dbReference>
<dbReference type="GO" id="GO:0002250">
    <property type="term" value="P:adaptive immune response"/>
    <property type="evidence" value="ECO:0007669"/>
    <property type="project" value="UniProtKB-KW"/>
</dbReference>
<dbReference type="GO" id="GO:0006955">
    <property type="term" value="P:immune response"/>
    <property type="evidence" value="ECO:0000318"/>
    <property type="project" value="GO_Central"/>
</dbReference>
<dbReference type="CDD" id="cd04980">
    <property type="entry name" value="IgV_L_kappa"/>
    <property type="match status" value="1"/>
</dbReference>
<dbReference type="FunFam" id="2.60.40.10:FF:002526">
    <property type="entry name" value="Immunolglobulin kappa light chain variable region L22"/>
    <property type="match status" value="1"/>
</dbReference>
<dbReference type="Gene3D" id="2.60.40.10">
    <property type="entry name" value="Immunoglobulins"/>
    <property type="match status" value="1"/>
</dbReference>
<dbReference type="InterPro" id="IPR007110">
    <property type="entry name" value="Ig-like_dom"/>
</dbReference>
<dbReference type="InterPro" id="IPR036179">
    <property type="entry name" value="Ig-like_dom_sf"/>
</dbReference>
<dbReference type="InterPro" id="IPR013783">
    <property type="entry name" value="Ig-like_fold"/>
</dbReference>
<dbReference type="InterPro" id="IPR003599">
    <property type="entry name" value="Ig_sub"/>
</dbReference>
<dbReference type="InterPro" id="IPR013106">
    <property type="entry name" value="Ig_V-set"/>
</dbReference>
<dbReference type="InterPro" id="IPR050150">
    <property type="entry name" value="IgV_Light_Chain"/>
</dbReference>
<dbReference type="PANTHER" id="PTHR23267">
    <property type="entry name" value="IMMUNOGLOBULIN LIGHT CHAIN"/>
    <property type="match status" value="1"/>
</dbReference>
<dbReference type="Pfam" id="PF07686">
    <property type="entry name" value="V-set"/>
    <property type="match status" value="1"/>
</dbReference>
<dbReference type="SMART" id="SM00409">
    <property type="entry name" value="IG"/>
    <property type="match status" value="1"/>
</dbReference>
<dbReference type="SMART" id="SM00406">
    <property type="entry name" value="IGv"/>
    <property type="match status" value="1"/>
</dbReference>
<dbReference type="SUPFAM" id="SSF48726">
    <property type="entry name" value="Immunoglobulin"/>
    <property type="match status" value="1"/>
</dbReference>
<dbReference type="PROSITE" id="PS50835">
    <property type="entry name" value="IG_LIKE"/>
    <property type="match status" value="1"/>
</dbReference>
<organism>
    <name type="scientific">Rattus norvegicus</name>
    <name type="common">Rat</name>
    <dbReference type="NCBI Taxonomy" id="10116"/>
    <lineage>
        <taxon>Eukaryota</taxon>
        <taxon>Metazoa</taxon>
        <taxon>Chordata</taxon>
        <taxon>Craniata</taxon>
        <taxon>Vertebrata</taxon>
        <taxon>Euteleostomi</taxon>
        <taxon>Mammalia</taxon>
        <taxon>Eutheria</taxon>
        <taxon>Euarchontoglires</taxon>
        <taxon>Glires</taxon>
        <taxon>Rodentia</taxon>
        <taxon>Myomorpha</taxon>
        <taxon>Muroidea</taxon>
        <taxon>Muridae</taxon>
        <taxon>Murinae</taxon>
        <taxon>Rattus</taxon>
    </lineage>
</organism>
<proteinExistence type="evidence at protein level"/>
<reference key="1">
    <citation type="journal article" date="1975" name="J. Immunol.">
        <title>The primary structure of a rat kappa Bence Jones protein: phylogenetic relationships of V- and C-region genes.</title>
        <authorList>
            <person name="Starace V."/>
            <person name="Querinjean P."/>
        </authorList>
    </citation>
    <scope>PROTEIN SEQUENCE</scope>
    <source>
        <strain>Louvain</strain>
    </source>
</reference>
<name>KVX01_RAT</name>
<feature type="chain" id="PRO_0000059736" description="Ig kappa chain V region S211">
    <location>
        <begin position="1"/>
        <end position="109" status="greater than"/>
    </location>
</feature>
<feature type="region of interest" description="Framework-1">
    <location>
        <begin position="1"/>
        <end position="23"/>
    </location>
</feature>
<feature type="region of interest" description="Complementarity-determining-1">
    <location>
        <begin position="24"/>
        <end position="35"/>
    </location>
</feature>
<feature type="region of interest" description="Framework-2">
    <location>
        <begin position="36"/>
        <end position="50"/>
    </location>
</feature>
<feature type="region of interest" description="Complementarity-determining-2">
    <location>
        <begin position="51"/>
        <end position="57"/>
    </location>
</feature>
<feature type="region of interest" description="Framework-3">
    <location>
        <begin position="58"/>
        <end position="89"/>
    </location>
</feature>
<feature type="region of interest" description="Complementarity-determining-3">
    <location>
        <begin position="90"/>
        <end position="98"/>
    </location>
</feature>
<feature type="region of interest" description="Framework-4">
    <location>
        <begin position="99"/>
        <end position="108"/>
    </location>
</feature>
<feature type="non-terminal residue">
    <location>
        <position position="109"/>
    </location>
</feature>
<comment type="miscellaneous">
    <text>This is a Bence-Jones protein.</text>
</comment>